<proteinExistence type="inferred from homology"/>
<name>CTPJ_MYCTO</name>
<dbReference type="EC" id="7.2.2.-"/>
<dbReference type="EMBL" id="AE000516">
    <property type="protein sequence ID" value="AAK48215.1"/>
    <property type="molecule type" value="Genomic_DNA"/>
</dbReference>
<dbReference type="PIR" id="H70798">
    <property type="entry name" value="H70798"/>
</dbReference>
<dbReference type="RefSeq" id="WP_003899665.1">
    <property type="nucleotide sequence ID" value="NZ_KK341227.1"/>
</dbReference>
<dbReference type="SMR" id="P9WPT6"/>
<dbReference type="KEGG" id="mtc:MT3851"/>
<dbReference type="PATRIC" id="fig|83331.31.peg.4144"/>
<dbReference type="HOGENOM" id="CLU_001771_6_3_11"/>
<dbReference type="Proteomes" id="UP000001020">
    <property type="component" value="Chromosome"/>
</dbReference>
<dbReference type="GO" id="GO:0005886">
    <property type="term" value="C:plasma membrane"/>
    <property type="evidence" value="ECO:0007669"/>
    <property type="project" value="UniProtKB-SubCell"/>
</dbReference>
<dbReference type="GO" id="GO:0005524">
    <property type="term" value="F:ATP binding"/>
    <property type="evidence" value="ECO:0007669"/>
    <property type="project" value="UniProtKB-KW"/>
</dbReference>
<dbReference type="GO" id="GO:0016887">
    <property type="term" value="F:ATP hydrolysis activity"/>
    <property type="evidence" value="ECO:0007669"/>
    <property type="project" value="InterPro"/>
</dbReference>
<dbReference type="GO" id="GO:0019829">
    <property type="term" value="F:ATPase-coupled monoatomic cation transmembrane transporter activity"/>
    <property type="evidence" value="ECO:0007669"/>
    <property type="project" value="InterPro"/>
</dbReference>
<dbReference type="GO" id="GO:0046872">
    <property type="term" value="F:metal ion binding"/>
    <property type="evidence" value="ECO:0007669"/>
    <property type="project" value="UniProtKB-KW"/>
</dbReference>
<dbReference type="CDD" id="cd07551">
    <property type="entry name" value="P-type_ATPase_HM_ZosA_PfeT-like"/>
    <property type="match status" value="1"/>
</dbReference>
<dbReference type="FunFam" id="2.70.150.10:FF:000002">
    <property type="entry name" value="Copper-transporting ATPase 1, putative"/>
    <property type="match status" value="1"/>
</dbReference>
<dbReference type="Gene3D" id="3.40.1110.10">
    <property type="entry name" value="Calcium-transporting ATPase, cytoplasmic domain N"/>
    <property type="match status" value="1"/>
</dbReference>
<dbReference type="Gene3D" id="2.70.150.10">
    <property type="entry name" value="Calcium-transporting ATPase, cytoplasmic transduction domain A"/>
    <property type="match status" value="1"/>
</dbReference>
<dbReference type="Gene3D" id="3.40.50.1000">
    <property type="entry name" value="HAD superfamily/HAD-like"/>
    <property type="match status" value="1"/>
</dbReference>
<dbReference type="InterPro" id="IPR023299">
    <property type="entry name" value="ATPase_P-typ_cyto_dom_N"/>
</dbReference>
<dbReference type="InterPro" id="IPR018303">
    <property type="entry name" value="ATPase_P-typ_P_site"/>
</dbReference>
<dbReference type="InterPro" id="IPR023298">
    <property type="entry name" value="ATPase_P-typ_TM_dom_sf"/>
</dbReference>
<dbReference type="InterPro" id="IPR008250">
    <property type="entry name" value="ATPase_P-typ_transduc_dom_A_sf"/>
</dbReference>
<dbReference type="InterPro" id="IPR051949">
    <property type="entry name" value="Cation_Transport_ATPase"/>
</dbReference>
<dbReference type="InterPro" id="IPR036412">
    <property type="entry name" value="HAD-like_sf"/>
</dbReference>
<dbReference type="InterPro" id="IPR023214">
    <property type="entry name" value="HAD_sf"/>
</dbReference>
<dbReference type="InterPro" id="IPR027256">
    <property type="entry name" value="P-typ_ATPase_IB"/>
</dbReference>
<dbReference type="InterPro" id="IPR001757">
    <property type="entry name" value="P_typ_ATPase"/>
</dbReference>
<dbReference type="InterPro" id="IPR044492">
    <property type="entry name" value="P_typ_ATPase_HD_dom"/>
</dbReference>
<dbReference type="NCBIfam" id="TIGR01525">
    <property type="entry name" value="ATPase-IB_hvy"/>
    <property type="match status" value="1"/>
</dbReference>
<dbReference type="NCBIfam" id="TIGR01494">
    <property type="entry name" value="ATPase_P-type"/>
    <property type="match status" value="1"/>
</dbReference>
<dbReference type="PANTHER" id="PTHR43079:SF1">
    <property type="entry name" value="CADMIUM_ZINC-TRANSPORTING ATPASE HMA1, CHLOROPLASTIC-RELATED"/>
    <property type="match status" value="1"/>
</dbReference>
<dbReference type="PANTHER" id="PTHR43079">
    <property type="entry name" value="PROBABLE CADMIUM/ZINC-TRANSPORTING ATPASE HMA1"/>
    <property type="match status" value="1"/>
</dbReference>
<dbReference type="Pfam" id="PF00122">
    <property type="entry name" value="E1-E2_ATPase"/>
    <property type="match status" value="1"/>
</dbReference>
<dbReference type="Pfam" id="PF00702">
    <property type="entry name" value="Hydrolase"/>
    <property type="match status" value="1"/>
</dbReference>
<dbReference type="PRINTS" id="PR00119">
    <property type="entry name" value="CATATPASE"/>
</dbReference>
<dbReference type="PRINTS" id="PR00941">
    <property type="entry name" value="CDATPASE"/>
</dbReference>
<dbReference type="SFLD" id="SFLDS00003">
    <property type="entry name" value="Haloacid_Dehalogenase"/>
    <property type="match status" value="1"/>
</dbReference>
<dbReference type="SFLD" id="SFLDF00027">
    <property type="entry name" value="p-type_atpase"/>
    <property type="match status" value="1"/>
</dbReference>
<dbReference type="SUPFAM" id="SSF81653">
    <property type="entry name" value="Calcium ATPase, transduction domain A"/>
    <property type="match status" value="1"/>
</dbReference>
<dbReference type="SUPFAM" id="SSF81665">
    <property type="entry name" value="Calcium ATPase, transmembrane domain M"/>
    <property type="match status" value="1"/>
</dbReference>
<dbReference type="SUPFAM" id="SSF56784">
    <property type="entry name" value="HAD-like"/>
    <property type="match status" value="1"/>
</dbReference>
<dbReference type="SUPFAM" id="SSF81660">
    <property type="entry name" value="Metal cation-transporting ATPase, ATP-binding domain N"/>
    <property type="match status" value="1"/>
</dbReference>
<dbReference type="PROSITE" id="PS00154">
    <property type="entry name" value="ATPASE_E1_E2"/>
    <property type="match status" value="1"/>
</dbReference>
<feature type="chain" id="PRO_0000426890" description="Probable cation-transporting P-type ATPase J">
    <location>
        <begin position="1"/>
        <end position="660"/>
    </location>
</feature>
<feature type="transmembrane region" description="Helical" evidence="2">
    <location>
        <begin position="33"/>
        <end position="53"/>
    </location>
</feature>
<feature type="transmembrane region" description="Helical" evidence="2">
    <location>
        <begin position="60"/>
        <end position="80"/>
    </location>
</feature>
<feature type="transmembrane region" description="Helical" evidence="2">
    <location>
        <begin position="94"/>
        <end position="114"/>
    </location>
</feature>
<feature type="transmembrane region" description="Helical" evidence="2">
    <location>
        <begin position="261"/>
        <end position="281"/>
    </location>
</feature>
<feature type="transmembrane region" description="Helical" evidence="2">
    <location>
        <begin position="292"/>
        <end position="312"/>
    </location>
</feature>
<feature type="transmembrane region" description="Helical" evidence="2">
    <location>
        <begin position="598"/>
        <end position="618"/>
    </location>
</feature>
<feature type="active site" description="4-aspartylphosphate intermediate" evidence="1">
    <location>
        <position position="340"/>
    </location>
</feature>
<feature type="binding site" evidence="1">
    <location>
        <position position="544"/>
    </location>
    <ligand>
        <name>Mg(2+)</name>
        <dbReference type="ChEBI" id="CHEBI:18420"/>
    </ligand>
</feature>
<feature type="binding site" evidence="1">
    <location>
        <position position="548"/>
    </location>
    <ligand>
        <name>Mg(2+)</name>
        <dbReference type="ChEBI" id="CHEBI:18420"/>
    </ligand>
</feature>
<evidence type="ECO:0000250" key="1"/>
<evidence type="ECO:0000255" key="2"/>
<evidence type="ECO:0000305" key="3"/>
<keyword id="KW-0067">ATP-binding</keyword>
<keyword id="KW-1003">Cell membrane</keyword>
<keyword id="KW-0460">Magnesium</keyword>
<keyword id="KW-0472">Membrane</keyword>
<keyword id="KW-0479">Metal-binding</keyword>
<keyword id="KW-0547">Nucleotide-binding</keyword>
<keyword id="KW-0597">Phosphoprotein</keyword>
<keyword id="KW-1185">Reference proteome</keyword>
<keyword id="KW-1278">Translocase</keyword>
<keyword id="KW-0812">Transmembrane</keyword>
<keyword id="KW-1133">Transmembrane helix</keyword>
<comment type="catalytic activity">
    <reaction>
        <text>ATP + H2O = ADP + phosphate + H(+)</text>
        <dbReference type="Rhea" id="RHEA:13065"/>
        <dbReference type="ChEBI" id="CHEBI:15377"/>
        <dbReference type="ChEBI" id="CHEBI:15378"/>
        <dbReference type="ChEBI" id="CHEBI:30616"/>
        <dbReference type="ChEBI" id="CHEBI:43474"/>
        <dbReference type="ChEBI" id="CHEBI:456216"/>
    </reaction>
</comment>
<comment type="subcellular location">
    <subcellularLocation>
        <location evidence="3">Cell membrane</location>
        <topology evidence="3">Multi-pass membrane protein</topology>
    </subcellularLocation>
</comment>
<comment type="similarity">
    <text evidence="3">Belongs to the cation transport ATPase (P-type) (TC 3.A.3) family. Type IB subfamily.</text>
</comment>
<protein>
    <recommendedName>
        <fullName>Probable cation-transporting P-type ATPase J</fullName>
        <ecNumber>7.2.2.-</ecNumber>
    </recommendedName>
</protein>
<organism>
    <name type="scientific">Mycobacterium tuberculosis (strain CDC 1551 / Oshkosh)</name>
    <dbReference type="NCBI Taxonomy" id="83331"/>
    <lineage>
        <taxon>Bacteria</taxon>
        <taxon>Bacillati</taxon>
        <taxon>Actinomycetota</taxon>
        <taxon>Actinomycetes</taxon>
        <taxon>Mycobacteriales</taxon>
        <taxon>Mycobacteriaceae</taxon>
        <taxon>Mycobacterium</taxon>
        <taxon>Mycobacterium tuberculosis complex</taxon>
    </lineage>
</organism>
<reference key="1">
    <citation type="journal article" date="2002" name="J. Bacteriol.">
        <title>Whole-genome comparison of Mycobacterium tuberculosis clinical and laboratory strains.</title>
        <authorList>
            <person name="Fleischmann R.D."/>
            <person name="Alland D."/>
            <person name="Eisen J.A."/>
            <person name="Carpenter L."/>
            <person name="White O."/>
            <person name="Peterson J.D."/>
            <person name="DeBoy R.T."/>
            <person name="Dodson R.J."/>
            <person name="Gwinn M.L."/>
            <person name="Haft D.H."/>
            <person name="Hickey E.K."/>
            <person name="Kolonay J.F."/>
            <person name="Nelson W.C."/>
            <person name="Umayam L.A."/>
            <person name="Ermolaeva M.D."/>
            <person name="Salzberg S.L."/>
            <person name="Delcher A."/>
            <person name="Utterback T.R."/>
            <person name="Weidman J.F."/>
            <person name="Khouri H.M."/>
            <person name="Gill J."/>
            <person name="Mikula A."/>
            <person name="Bishai W."/>
            <person name="Jacobs W.R. Jr."/>
            <person name="Venter J.C."/>
            <person name="Fraser C.M."/>
        </authorList>
    </citation>
    <scope>NUCLEOTIDE SEQUENCE [LARGE SCALE GENOMIC DNA]</scope>
    <source>
        <strain>CDC 1551 / Oshkosh</strain>
    </source>
</reference>
<sequence length="660" mass="68645">MAVRELSPARCTSASPLVLARRTKLFALSEMRWAALALGLFSAGLLTQLCGAPQWVRWALFLACYATGGWEPGLAGLQALQRRTLDVDLLMVVAAIGAAAIGQIAEGALLIVIFATSGALEALVTARTADSVRGLMGLAPGTATRVGAGGGEETVNAADLRIGDIVLVRPGERISADATVLAGGSEVDQATVTGEPLPVDKSIGDQVFAGTVNGTGALRIRVDRLARDSVVARIATLVEQASQTKARTQLFIEKVEQRYSIGMVAVTLAVFAVPPLWGETLQRALLRAMTFMIVASPCAVVLATMPPLLAAIANAGRHGVLAKSAIVMEQLGTTTRIAFDKTGTLTRGTPELAGIWVYERRFTDDELLRLAAAAEYPSEHPLGAAIVKAAQSRRIRLPTVGEFTAHPGCRVTARVDGHVIAVGSATALLGTAGAAALEASMITAVDFLQGEGYTVVVVVCDSHPVGLLAITDQLRPEAAAAISAATKLTGAKPVLLTGDNRATADRLGVQVGIDDVRAGLLPDDKVAAVRQLQAGGARLTVVGDGINDAPALAAAHVGIAMGSARSELTLQTADAVVVRDDLTTIPTVIAMSRRARRIVVANLIVAVTFIAGLVVWDLAFTLPLPLGVARHEGSTIIVGLNGLRLLRHTAWRRAAGTAHR</sequence>
<accession>P9WPT6</accession>
<accession>F2GFW6</accession>
<accession>L0TGM0</accession>
<accession>O69710</accession>
<accession>Q7D4Y4</accession>
<gene>
    <name type="primary">ctpJ</name>
    <name type="synonym">nmtA</name>
    <name type="ordered locus">MT3851</name>
</gene>